<evidence type="ECO:0000255" key="1">
    <source>
        <dbReference type="HAMAP-Rule" id="MF_00031"/>
    </source>
</evidence>
<dbReference type="EMBL" id="CP000448">
    <property type="protein sequence ID" value="ABI68739.1"/>
    <property type="molecule type" value="Genomic_DNA"/>
</dbReference>
<dbReference type="RefSeq" id="WP_011640838.1">
    <property type="nucleotide sequence ID" value="NC_008346.1"/>
</dbReference>
<dbReference type="SMR" id="Q0AX15"/>
<dbReference type="STRING" id="335541.Swol_1432"/>
<dbReference type="KEGG" id="swo:Swol_1432"/>
<dbReference type="eggNOG" id="COG0632">
    <property type="taxonomic scope" value="Bacteria"/>
</dbReference>
<dbReference type="HOGENOM" id="CLU_087936_0_0_9"/>
<dbReference type="OrthoDB" id="5293449at2"/>
<dbReference type="Proteomes" id="UP000001968">
    <property type="component" value="Chromosome"/>
</dbReference>
<dbReference type="GO" id="GO:0005737">
    <property type="term" value="C:cytoplasm"/>
    <property type="evidence" value="ECO:0007669"/>
    <property type="project" value="UniProtKB-SubCell"/>
</dbReference>
<dbReference type="GO" id="GO:0009379">
    <property type="term" value="C:Holliday junction helicase complex"/>
    <property type="evidence" value="ECO:0007669"/>
    <property type="project" value="InterPro"/>
</dbReference>
<dbReference type="GO" id="GO:0048476">
    <property type="term" value="C:Holliday junction resolvase complex"/>
    <property type="evidence" value="ECO:0007669"/>
    <property type="project" value="UniProtKB-UniRule"/>
</dbReference>
<dbReference type="GO" id="GO:0005524">
    <property type="term" value="F:ATP binding"/>
    <property type="evidence" value="ECO:0007669"/>
    <property type="project" value="InterPro"/>
</dbReference>
<dbReference type="GO" id="GO:0000400">
    <property type="term" value="F:four-way junction DNA binding"/>
    <property type="evidence" value="ECO:0007669"/>
    <property type="project" value="UniProtKB-UniRule"/>
</dbReference>
<dbReference type="GO" id="GO:0009378">
    <property type="term" value="F:four-way junction helicase activity"/>
    <property type="evidence" value="ECO:0007669"/>
    <property type="project" value="InterPro"/>
</dbReference>
<dbReference type="GO" id="GO:0006310">
    <property type="term" value="P:DNA recombination"/>
    <property type="evidence" value="ECO:0007669"/>
    <property type="project" value="UniProtKB-UniRule"/>
</dbReference>
<dbReference type="GO" id="GO:0006281">
    <property type="term" value="P:DNA repair"/>
    <property type="evidence" value="ECO:0007669"/>
    <property type="project" value="UniProtKB-UniRule"/>
</dbReference>
<dbReference type="CDD" id="cd14332">
    <property type="entry name" value="UBA_RuvA_C"/>
    <property type="match status" value="1"/>
</dbReference>
<dbReference type="Gene3D" id="1.10.150.20">
    <property type="entry name" value="5' to 3' exonuclease, C-terminal subdomain"/>
    <property type="match status" value="1"/>
</dbReference>
<dbReference type="Gene3D" id="2.40.50.140">
    <property type="entry name" value="Nucleic acid-binding proteins"/>
    <property type="match status" value="1"/>
</dbReference>
<dbReference type="HAMAP" id="MF_00031">
    <property type="entry name" value="DNA_HJ_migration_RuvA"/>
    <property type="match status" value="1"/>
</dbReference>
<dbReference type="InterPro" id="IPR013849">
    <property type="entry name" value="DNA_helicase_Holl-junc_RuvA_I"/>
</dbReference>
<dbReference type="InterPro" id="IPR003583">
    <property type="entry name" value="Hlx-hairpin-Hlx_DNA-bd_motif"/>
</dbReference>
<dbReference type="InterPro" id="IPR012340">
    <property type="entry name" value="NA-bd_OB-fold"/>
</dbReference>
<dbReference type="InterPro" id="IPR000085">
    <property type="entry name" value="RuvA"/>
</dbReference>
<dbReference type="InterPro" id="IPR010994">
    <property type="entry name" value="RuvA_2-like"/>
</dbReference>
<dbReference type="InterPro" id="IPR011114">
    <property type="entry name" value="RuvA_C"/>
</dbReference>
<dbReference type="NCBIfam" id="TIGR00084">
    <property type="entry name" value="ruvA"/>
    <property type="match status" value="1"/>
</dbReference>
<dbReference type="Pfam" id="PF14520">
    <property type="entry name" value="HHH_5"/>
    <property type="match status" value="1"/>
</dbReference>
<dbReference type="Pfam" id="PF01330">
    <property type="entry name" value="RuvA_N"/>
    <property type="match status" value="1"/>
</dbReference>
<dbReference type="SMART" id="SM00278">
    <property type="entry name" value="HhH1"/>
    <property type="match status" value="2"/>
</dbReference>
<dbReference type="SUPFAM" id="SSF50249">
    <property type="entry name" value="Nucleic acid-binding proteins"/>
    <property type="match status" value="1"/>
</dbReference>
<dbReference type="SUPFAM" id="SSF47781">
    <property type="entry name" value="RuvA domain 2-like"/>
    <property type="match status" value="1"/>
</dbReference>
<gene>
    <name evidence="1" type="primary">ruvA</name>
    <name type="ordered locus">Swol_1432</name>
</gene>
<protein>
    <recommendedName>
        <fullName evidence="1">Holliday junction branch migration complex subunit RuvA</fullName>
    </recommendedName>
</protein>
<comment type="function">
    <text evidence="1">The RuvA-RuvB-RuvC complex processes Holliday junction (HJ) DNA during genetic recombination and DNA repair, while the RuvA-RuvB complex plays an important role in the rescue of blocked DNA replication forks via replication fork reversal (RFR). RuvA specifically binds to HJ cruciform DNA, conferring on it an open structure. The RuvB hexamer acts as an ATP-dependent pump, pulling dsDNA into and through the RuvAB complex. HJ branch migration allows RuvC to scan DNA until it finds its consensus sequence, where it cleaves and resolves the cruciform DNA.</text>
</comment>
<comment type="subunit">
    <text evidence="1">Homotetramer. Forms an RuvA(8)-RuvB(12)-Holliday junction (HJ) complex. HJ DNA is sandwiched between 2 RuvA tetramers; dsDNA enters through RuvA and exits via RuvB. An RuvB hexamer assembles on each DNA strand where it exits the tetramer. Each RuvB hexamer is contacted by two RuvA subunits (via domain III) on 2 adjacent RuvB subunits; this complex drives branch migration. In the full resolvosome a probable DNA-RuvA(4)-RuvB(12)-RuvC(2) complex forms which resolves the HJ.</text>
</comment>
<comment type="subcellular location">
    <subcellularLocation>
        <location evidence="1">Cytoplasm</location>
    </subcellularLocation>
</comment>
<comment type="domain">
    <text evidence="1">Has three domains with a flexible linker between the domains II and III and assumes an 'L' shape. Domain III is highly mobile and contacts RuvB.</text>
</comment>
<comment type="similarity">
    <text evidence="1">Belongs to the RuvA family.</text>
</comment>
<keyword id="KW-0963">Cytoplasm</keyword>
<keyword id="KW-0227">DNA damage</keyword>
<keyword id="KW-0233">DNA recombination</keyword>
<keyword id="KW-0234">DNA repair</keyword>
<keyword id="KW-0238">DNA-binding</keyword>
<keyword id="KW-1185">Reference proteome</keyword>
<feature type="chain" id="PRO_1000002587" description="Holliday junction branch migration complex subunit RuvA">
    <location>
        <begin position="1"/>
        <end position="199"/>
    </location>
</feature>
<feature type="region of interest" description="Domain I" evidence="1">
    <location>
        <begin position="1"/>
        <end position="64"/>
    </location>
</feature>
<feature type="region of interest" description="Domain II" evidence="1">
    <location>
        <begin position="65"/>
        <end position="143"/>
    </location>
</feature>
<feature type="region of interest" description="Flexible linker" evidence="1">
    <location>
        <begin position="144"/>
        <end position="148"/>
    </location>
</feature>
<feature type="region of interest" description="Domain III" evidence="1">
    <location>
        <begin position="148"/>
        <end position="199"/>
    </location>
</feature>
<reference key="1">
    <citation type="journal article" date="2010" name="Environ. Microbiol.">
        <title>The genome of Syntrophomonas wolfei: new insights into syntrophic metabolism and biohydrogen production.</title>
        <authorList>
            <person name="Sieber J.R."/>
            <person name="Sims D.R."/>
            <person name="Han C."/>
            <person name="Kim E."/>
            <person name="Lykidis A."/>
            <person name="Lapidus A.L."/>
            <person name="McDonnald E."/>
            <person name="Rohlin L."/>
            <person name="Culley D.E."/>
            <person name="Gunsalus R."/>
            <person name="McInerney M.J."/>
        </authorList>
    </citation>
    <scope>NUCLEOTIDE SEQUENCE [LARGE SCALE GENOMIC DNA]</scope>
    <source>
        <strain>DSM 2245B / Goettingen</strain>
    </source>
</reference>
<organism>
    <name type="scientific">Syntrophomonas wolfei subsp. wolfei (strain DSM 2245B / Goettingen)</name>
    <dbReference type="NCBI Taxonomy" id="335541"/>
    <lineage>
        <taxon>Bacteria</taxon>
        <taxon>Bacillati</taxon>
        <taxon>Bacillota</taxon>
        <taxon>Clostridia</taxon>
        <taxon>Eubacteriales</taxon>
        <taxon>Syntrophomonadaceae</taxon>
        <taxon>Syntrophomonas</taxon>
    </lineage>
</organism>
<accession>Q0AX15</accession>
<sequence length="199" mass="22686">MIAFLKGAVFERRPDSIIIDVNGVGYEVNIHSRLFPRLPQRGEPILIHTFLQVLENEFKLFGFLDQDELRLFKTLLTVSGIGSKGALAVLSTMEPLVFYRAIASQDEKTLVRIPGVGKKTAQRMIFELQDKVPELKLVEVEKEQRPLLDELMEALEILGYSRSEVLPAIMDLNRNKQLGNIVEENIKLVLKAKAQEMRR</sequence>
<name>RUVA_SYNWW</name>
<proteinExistence type="inferred from homology"/>